<geneLocation type="plasmid">
    <name>pHV3</name>
</geneLocation>
<accession>D4GP33</accession>
<evidence type="ECO:0000250" key="1">
    <source>
        <dbReference type="UniProtKB" id="P09147"/>
    </source>
</evidence>
<evidence type="ECO:0000255" key="2">
    <source>
        <dbReference type="HAMAP-Rule" id="MF_02046"/>
    </source>
</evidence>
<evidence type="ECO:0000269" key="3">
    <source>
    </source>
</evidence>
<evidence type="ECO:0000269" key="4">
    <source>
    </source>
</evidence>
<evidence type="ECO:0000303" key="5">
    <source>
    </source>
</evidence>
<evidence type="ECO:0000303" key="6">
    <source>
    </source>
</evidence>
<evidence type="ECO:0000305" key="7"/>
<evidence type="ECO:0000305" key="8">
    <source>
    </source>
</evidence>
<dbReference type="EC" id="1.1.1.376" evidence="3"/>
<dbReference type="EMBL" id="CP001953">
    <property type="protein sequence ID" value="ADE01542.1"/>
    <property type="molecule type" value="Genomic_DNA"/>
</dbReference>
<dbReference type="EMBL" id="AOHU01000021">
    <property type="protein sequence ID" value="ELY36799.1"/>
    <property type="molecule type" value="Genomic_DNA"/>
</dbReference>
<dbReference type="RefSeq" id="WP_004041122.1">
    <property type="nucleotide sequence ID" value="NC_013964.1"/>
</dbReference>
<dbReference type="SMR" id="D4GP33"/>
<dbReference type="PaxDb" id="309800-C498_01595"/>
<dbReference type="EnsemblBacteria" id="ADE01542">
    <property type="protein sequence ID" value="ADE01542"/>
    <property type="gene ID" value="HVO_B0032"/>
</dbReference>
<dbReference type="GeneID" id="8919002"/>
<dbReference type="KEGG" id="hvo:HVO_B0032"/>
<dbReference type="PATRIC" id="fig|309800.29.peg.305"/>
<dbReference type="eggNOG" id="arCOG04704">
    <property type="taxonomic scope" value="Archaea"/>
</dbReference>
<dbReference type="HOGENOM" id="CLU_079334_1_0_2"/>
<dbReference type="OrthoDB" id="199183at2157"/>
<dbReference type="BioCyc" id="MetaCyc:MONOMER-21251"/>
<dbReference type="BRENDA" id="1.1.1.376">
    <property type="organism ID" value="2561"/>
</dbReference>
<dbReference type="BRENDA" id="1.1.1.46">
    <property type="organism ID" value="2561"/>
</dbReference>
<dbReference type="UniPathway" id="UPA00141"/>
<dbReference type="Proteomes" id="UP000008243">
    <property type="component" value="Plasmid pHV3"/>
</dbReference>
<dbReference type="Proteomes" id="UP000011532">
    <property type="component" value="Unassembled WGS sequence"/>
</dbReference>
<dbReference type="GO" id="GO:0050022">
    <property type="term" value="F:L-arabinose 1-dehydrogenase (NAD+) activity"/>
    <property type="evidence" value="ECO:0007669"/>
    <property type="project" value="RHEA"/>
</dbReference>
<dbReference type="GO" id="GO:0044103">
    <property type="term" value="F:L-arabinose 1-dehydrogenase (NADP+) activity"/>
    <property type="evidence" value="ECO:0007669"/>
    <property type="project" value="UniProtKB-EC"/>
</dbReference>
<dbReference type="GO" id="GO:0016616">
    <property type="term" value="F:oxidoreductase activity, acting on the CH-OH group of donors, NAD or NADP as acceptor"/>
    <property type="evidence" value="ECO:0000314"/>
    <property type="project" value="UniProtKB"/>
</dbReference>
<dbReference type="GO" id="GO:0019572">
    <property type="term" value="P:L-arabinose catabolic process"/>
    <property type="evidence" value="ECO:0000315"/>
    <property type="project" value="UniProtKB"/>
</dbReference>
<dbReference type="GO" id="GO:0019570">
    <property type="term" value="P:L-arabinose catabolic process to 2-oxoglutarate"/>
    <property type="evidence" value="ECO:0007669"/>
    <property type="project" value="UniProtKB-UniPathway"/>
</dbReference>
<dbReference type="CDD" id="cd08946">
    <property type="entry name" value="SDR_e"/>
    <property type="match status" value="1"/>
</dbReference>
<dbReference type="Gene3D" id="3.40.50.720">
    <property type="entry name" value="NAD(P)-binding Rossmann-like Domain"/>
    <property type="match status" value="1"/>
</dbReference>
<dbReference type="InterPro" id="IPR001509">
    <property type="entry name" value="Epimerase_deHydtase"/>
</dbReference>
<dbReference type="InterPro" id="IPR036291">
    <property type="entry name" value="NAD(P)-bd_dom_sf"/>
</dbReference>
<dbReference type="PANTHER" id="PTHR43103:SF5">
    <property type="entry name" value="4-EPIMERASE, PUTATIVE (AFU_ORTHOLOGUE AFUA_7G00360)-RELATED"/>
    <property type="match status" value="1"/>
</dbReference>
<dbReference type="PANTHER" id="PTHR43103">
    <property type="entry name" value="NUCLEOSIDE-DIPHOSPHATE-SUGAR EPIMERASE"/>
    <property type="match status" value="1"/>
</dbReference>
<dbReference type="Pfam" id="PF01370">
    <property type="entry name" value="Epimerase"/>
    <property type="match status" value="1"/>
</dbReference>
<dbReference type="SUPFAM" id="SSF51735">
    <property type="entry name" value="NAD(P)-binding Rossmann-fold domains"/>
    <property type="match status" value="1"/>
</dbReference>
<protein>
    <recommendedName>
        <fullName evidence="5">L-arabinose 1-dehydrogenase (NAD(P)(+))</fullName>
        <shortName evidence="5">L-AraDH</shortName>
        <ecNumber evidence="3">1.1.1.376</ecNumber>
    </recommendedName>
</protein>
<sequence length="254" mass="27775">MARIAVTGAAGNVGRVTVEALASDHDVTPITHREREGLDSVILDVRDEDALTEAFEGHDIVVHLAANPNPDAAWDSVYEVNIGGTYNVYEAALAADIDRLVFASTNHVHQMYNIADATRPETLAADAEAVGVSDPPRPDSYYGVSKVFGEALGNYYADRHGLEVLNLRIGWLLTADEVREKMDEEESVARYVRAMWLSPGDCEQGMRRAVEASLPDSPLAVNLISANDDRYLSLTETMRAIGYRPRDNSATVVE</sequence>
<keyword id="KW-0054">Arabinose catabolism</keyword>
<keyword id="KW-0119">Carbohydrate metabolism</keyword>
<keyword id="KW-0903">Direct protein sequencing</keyword>
<keyword id="KW-0520">NAD</keyword>
<keyword id="KW-0521">NADP</keyword>
<keyword id="KW-0560">Oxidoreductase</keyword>
<keyword id="KW-0614">Plasmid</keyword>
<keyword id="KW-1185">Reference proteome</keyword>
<reference key="1">
    <citation type="journal article" date="2010" name="PLoS ONE">
        <title>The complete genome sequence of Haloferax volcanii DS2, a model archaeon.</title>
        <authorList>
            <person name="Hartman A.L."/>
            <person name="Norais C."/>
            <person name="Badger J.H."/>
            <person name="Delmas S."/>
            <person name="Haldenby S."/>
            <person name="Madupu R."/>
            <person name="Robinson J."/>
            <person name="Khouri H."/>
            <person name="Ren Q."/>
            <person name="Lowe T.M."/>
            <person name="Maupin-Furlow J."/>
            <person name="Pohlschroder M."/>
            <person name="Daniels C."/>
            <person name="Pfeiffer F."/>
            <person name="Allers T."/>
            <person name="Eisen J.A."/>
        </authorList>
    </citation>
    <scope>NUCLEOTIDE SEQUENCE [LARGE SCALE GENOMIC DNA]</scope>
    <source>
        <strain>ATCC 29605 / DSM 3757 / JCM 8879 / NBRC 14742 / NCIMB 2012 / VKM B-1768 / DS2</strain>
    </source>
</reference>
<reference key="2">
    <citation type="journal article" date="2014" name="PLoS Genet.">
        <title>Phylogenetically driven sequencing of extremely halophilic archaea reveals strategies for static and dynamic osmo-response.</title>
        <authorList>
            <person name="Becker E.A."/>
            <person name="Seitzer P.M."/>
            <person name="Tritt A."/>
            <person name="Larsen D."/>
            <person name="Krusor M."/>
            <person name="Yao A.I."/>
            <person name="Wu D."/>
            <person name="Madern D."/>
            <person name="Eisen J.A."/>
            <person name="Darling A.E."/>
            <person name="Facciotti M.T."/>
        </authorList>
    </citation>
    <scope>NUCLEOTIDE SEQUENCE [LARGE SCALE GENOMIC DNA]</scope>
    <source>
        <strain>ATCC 29605 / DSM 3757 / JCM 8879 / NBRC 14742 / NCIMB 2012 / VKM B-1768 / DS2</strain>
    </source>
</reference>
<reference key="3">
    <citation type="journal article" date="2013" name="Extremophiles">
        <title>L-Arabinose degradation pathway in the haloarchaeon Haloferax volcanii involves a novel type of L-arabinose dehydrogenase.</title>
        <authorList>
            <person name="Johnsen U."/>
            <person name="Sutter J.M."/>
            <person name="Zaiss H."/>
            <person name="Schoenheit P."/>
        </authorList>
    </citation>
    <scope>PROTEIN SEQUENCE OF 1-17</scope>
    <scope>FUNCTION</scope>
    <scope>CATALYTIC ACTIVITY</scope>
    <scope>BIOPHYSICOCHEMICAL PROPERTIES</scope>
    <scope>DISRUPTION PHENOTYPE</scope>
    <scope>SUBSTRATE SPECIFICITY</scope>
    <scope>PATHWAY</scope>
    <scope>INDUCTION</scope>
    <scope>SUBUNIT</scope>
</reference>
<reference key="4">
    <citation type="journal article" date="2015" name="Environ. Microbiol.">
        <title>XacR - a novel transcriptional regulator of D-xylose and L-arabinose catabolism in the haloarchaeon Haloferax volcanii.</title>
        <authorList>
            <person name="Johnsen U."/>
            <person name="Sutter J.M."/>
            <person name="Schulz A.C."/>
            <person name="Taestensen J.B."/>
            <person name="Schoenheit P."/>
        </authorList>
    </citation>
    <scope>INDUCTION</scope>
</reference>
<proteinExistence type="evidence at protein level"/>
<feature type="chain" id="PRO_0000435667" description="L-arabinose 1-dehydrogenase (NAD(P)(+))">
    <location>
        <begin position="1"/>
        <end position="254"/>
    </location>
</feature>
<feature type="active site" description="Proton acceptor" evidence="1 2">
    <location>
        <position position="142"/>
    </location>
</feature>
<feature type="binding site" evidence="1 2">
    <location>
        <position position="142"/>
    </location>
    <ligand>
        <name>NAD(+)</name>
        <dbReference type="ChEBI" id="CHEBI:57540"/>
    </ligand>
</feature>
<feature type="binding site" evidence="1 2">
    <location>
        <position position="146"/>
    </location>
    <ligand>
        <name>NAD(+)</name>
        <dbReference type="ChEBI" id="CHEBI:57540"/>
    </ligand>
</feature>
<comment type="function">
    <text evidence="3">L-AraDH initiates the degradation of L-arabinose. Catalyzes the NAD(P)(+)-dependent conversion of L-arabinose to L-arabino-gamma-lactone. It is highly specific for L-arabinose as substrate and can use both NADP(+) and NAD(+) as electron acceptor, with a slight preference for NADP(+).</text>
</comment>
<comment type="catalytic activity">
    <reaction evidence="3">
        <text>alpha-L-arabinopyanose + NAD(+) = L-arabinono-1,4-lactone + NADH + H(+)</text>
        <dbReference type="Rhea" id="RHEA:17925"/>
        <dbReference type="ChEBI" id="CHEBI:15378"/>
        <dbReference type="ChEBI" id="CHEBI:17100"/>
        <dbReference type="ChEBI" id="CHEBI:46987"/>
        <dbReference type="ChEBI" id="CHEBI:57540"/>
        <dbReference type="ChEBI" id="CHEBI:57945"/>
        <dbReference type="EC" id="1.1.1.376"/>
    </reaction>
</comment>
<comment type="catalytic activity">
    <reaction evidence="3">
        <text>alpha-L-arabinopyanose + NADP(+) = L-arabinono-1,4-lactone + NADPH + H(+)</text>
        <dbReference type="Rhea" id="RHEA:42664"/>
        <dbReference type="ChEBI" id="CHEBI:15378"/>
        <dbReference type="ChEBI" id="CHEBI:17100"/>
        <dbReference type="ChEBI" id="CHEBI:46987"/>
        <dbReference type="ChEBI" id="CHEBI:57783"/>
        <dbReference type="ChEBI" id="CHEBI:58349"/>
        <dbReference type="EC" id="1.1.1.376"/>
    </reaction>
</comment>
<comment type="biophysicochemical properties">
    <kinetics>
        <KM evidence="3">1 mM for NADP(+)</KM>
        <KM evidence="3">2 mM for NAD(+)</KM>
        <KM evidence="3">2.1 mM for L-arabinose</KM>
    </kinetics>
    <phDependence>
        <text evidence="3">Optimum pH is 8.5. It shows 50% activity at pH values of 6 and 10.</text>
    </phDependence>
    <temperatureDependence>
        <text evidence="3">Optimum temperature is 45 degrees Celsius.</text>
    </temperatureDependence>
</comment>
<comment type="pathway">
    <text evidence="8">Carbohydrate degradation; L-arabinose degradation via L-arabinono-1,4-lactone pathway.</text>
</comment>
<comment type="subunit">
    <text evidence="3">Homotetramer.</text>
</comment>
<comment type="induction">
    <text evidence="3 4">Transcriptionally up-regulated by both L-arabinose and D-xylose via the pentose-specific regulator XacR.</text>
</comment>
<comment type="disruption phenotype">
    <text evidence="3">Cells lacking this gene lose the ability to grow on L-arabinose but not on D-xylose.</text>
</comment>
<comment type="similarity">
    <text evidence="7">Belongs to the NAD(P)-dependent epimerase/dehydratase family.</text>
</comment>
<organism>
    <name type="scientific">Haloferax volcanii (strain ATCC 29605 / DSM 3757 / JCM 8879 / NBRC 14742 / NCIMB 2012 / VKM B-1768 / DS2)</name>
    <name type="common">Halobacterium volcanii</name>
    <dbReference type="NCBI Taxonomy" id="309800"/>
    <lineage>
        <taxon>Archaea</taxon>
        <taxon>Methanobacteriati</taxon>
        <taxon>Methanobacteriota</taxon>
        <taxon>Stenosarchaea group</taxon>
        <taxon>Halobacteria</taxon>
        <taxon>Halobacteriales</taxon>
        <taxon>Haloferacaceae</taxon>
        <taxon>Haloferax</taxon>
    </lineage>
</organism>
<name>ARADH_HALVD</name>
<gene>
    <name evidence="6" type="primary">xacB</name>
    <name type="ordered locus">HVO_B0032</name>
    <name type="ORF">C498_01595</name>
</gene>